<proteinExistence type="inferred from homology"/>
<sequence length="302" mass="34132">MTLPPLSHLDRLEAESIHILREVAAEFRAPVMLYSVGKDSSVLLHLLLKAFAPSRPPIPLLHIDTRWKFREMIAFRDRRAAETGVDLRVHINPDGVAQDVSPISHGAAVHTDIMKTQGLKQALEQGGFDAAIGGARRDEEKSRAKERVFSFRNARHRWDPKNQRPELWNLYNARTKPGESVRVFPLSNWTELDVWLYIYREKIPVVPLYFAAPRPVVARDGAWIMVDDARLPLHPGETPQLRSVRFRTLGCYPLTGAIESSADTLEAVIAEMLVSTSSERQGRMIDHAPGASMEQKKVEGYF</sequence>
<name>CYSD_XANOP</name>
<evidence type="ECO:0000255" key="1">
    <source>
        <dbReference type="HAMAP-Rule" id="MF_00064"/>
    </source>
</evidence>
<dbReference type="EC" id="2.7.7.4" evidence="1"/>
<dbReference type="EMBL" id="CP000967">
    <property type="protein sequence ID" value="ACD60245.1"/>
    <property type="molecule type" value="Genomic_DNA"/>
</dbReference>
<dbReference type="RefSeq" id="WP_011259870.1">
    <property type="nucleotide sequence ID" value="NC_010717.2"/>
</dbReference>
<dbReference type="SMR" id="B2SI03"/>
<dbReference type="KEGG" id="xop:PXO_02134"/>
<dbReference type="eggNOG" id="COG0175">
    <property type="taxonomic scope" value="Bacteria"/>
</dbReference>
<dbReference type="HOGENOM" id="CLU_043026_0_0_6"/>
<dbReference type="UniPathway" id="UPA00140">
    <property type="reaction ID" value="UER00204"/>
</dbReference>
<dbReference type="PHI-base" id="PHI:1138"/>
<dbReference type="Proteomes" id="UP000001740">
    <property type="component" value="Chromosome"/>
</dbReference>
<dbReference type="GO" id="GO:0005524">
    <property type="term" value="F:ATP binding"/>
    <property type="evidence" value="ECO:0007669"/>
    <property type="project" value="UniProtKB-KW"/>
</dbReference>
<dbReference type="GO" id="GO:0004781">
    <property type="term" value="F:sulfate adenylyltransferase (ATP) activity"/>
    <property type="evidence" value="ECO:0007669"/>
    <property type="project" value="UniProtKB-UniRule"/>
</dbReference>
<dbReference type="GO" id="GO:0070814">
    <property type="term" value="P:hydrogen sulfide biosynthetic process"/>
    <property type="evidence" value="ECO:0007669"/>
    <property type="project" value="UniProtKB-UniRule"/>
</dbReference>
<dbReference type="GO" id="GO:0000103">
    <property type="term" value="P:sulfate assimilation"/>
    <property type="evidence" value="ECO:0007669"/>
    <property type="project" value="UniProtKB-UniRule"/>
</dbReference>
<dbReference type="CDD" id="cd23946">
    <property type="entry name" value="Sulfate_adenylyltransferase_2"/>
    <property type="match status" value="1"/>
</dbReference>
<dbReference type="FunFam" id="3.40.50.620:FF:000002">
    <property type="entry name" value="Sulfate adenylyltransferase subunit 2"/>
    <property type="match status" value="1"/>
</dbReference>
<dbReference type="Gene3D" id="3.40.50.620">
    <property type="entry name" value="HUPs"/>
    <property type="match status" value="1"/>
</dbReference>
<dbReference type="HAMAP" id="MF_00064">
    <property type="entry name" value="Sulf_adenylyltr_sub2"/>
    <property type="match status" value="1"/>
</dbReference>
<dbReference type="InterPro" id="IPR002500">
    <property type="entry name" value="PAPS_reduct_dom"/>
</dbReference>
<dbReference type="InterPro" id="IPR014729">
    <property type="entry name" value="Rossmann-like_a/b/a_fold"/>
</dbReference>
<dbReference type="InterPro" id="IPR011784">
    <property type="entry name" value="SO4_adenylTrfase_ssu"/>
</dbReference>
<dbReference type="InterPro" id="IPR050128">
    <property type="entry name" value="Sulfate_adenylyltrnsfr_sub2"/>
</dbReference>
<dbReference type="NCBIfam" id="TIGR02039">
    <property type="entry name" value="CysD"/>
    <property type="match status" value="1"/>
</dbReference>
<dbReference type="NCBIfam" id="NF003587">
    <property type="entry name" value="PRK05253.1"/>
    <property type="match status" value="1"/>
</dbReference>
<dbReference type="NCBIfam" id="NF009214">
    <property type="entry name" value="PRK12563.1"/>
    <property type="match status" value="1"/>
</dbReference>
<dbReference type="PANTHER" id="PTHR43196">
    <property type="entry name" value="SULFATE ADENYLYLTRANSFERASE SUBUNIT 2"/>
    <property type="match status" value="1"/>
</dbReference>
<dbReference type="PANTHER" id="PTHR43196:SF1">
    <property type="entry name" value="SULFATE ADENYLYLTRANSFERASE SUBUNIT 2"/>
    <property type="match status" value="1"/>
</dbReference>
<dbReference type="Pfam" id="PF01507">
    <property type="entry name" value="PAPS_reduct"/>
    <property type="match status" value="1"/>
</dbReference>
<dbReference type="PIRSF" id="PIRSF002936">
    <property type="entry name" value="CysDAde_trans"/>
    <property type="match status" value="1"/>
</dbReference>
<dbReference type="SUPFAM" id="SSF52402">
    <property type="entry name" value="Adenine nucleotide alpha hydrolases-like"/>
    <property type="match status" value="1"/>
</dbReference>
<accession>B2SI03</accession>
<organism>
    <name type="scientific">Xanthomonas oryzae pv. oryzae (strain PXO99A)</name>
    <dbReference type="NCBI Taxonomy" id="360094"/>
    <lineage>
        <taxon>Bacteria</taxon>
        <taxon>Pseudomonadati</taxon>
        <taxon>Pseudomonadota</taxon>
        <taxon>Gammaproteobacteria</taxon>
        <taxon>Lysobacterales</taxon>
        <taxon>Lysobacteraceae</taxon>
        <taxon>Xanthomonas</taxon>
    </lineage>
</organism>
<keyword id="KW-0067">ATP-binding</keyword>
<keyword id="KW-0547">Nucleotide-binding</keyword>
<keyword id="KW-0548">Nucleotidyltransferase</keyword>
<keyword id="KW-0808">Transferase</keyword>
<gene>
    <name evidence="1" type="primary">cysD</name>
    <name type="ordered locus">PXO_02134</name>
</gene>
<feature type="chain" id="PRO_1000092231" description="Sulfate adenylyltransferase subunit 2">
    <location>
        <begin position="1"/>
        <end position="302"/>
    </location>
</feature>
<protein>
    <recommendedName>
        <fullName evidence="1">Sulfate adenylyltransferase subunit 2</fullName>
        <ecNumber evidence="1">2.7.7.4</ecNumber>
    </recommendedName>
    <alternativeName>
        <fullName evidence="1">ATP-sulfurylase small subunit</fullName>
    </alternativeName>
    <alternativeName>
        <fullName evidence="1">Sulfate adenylate transferase</fullName>
        <shortName evidence="1">SAT</shortName>
    </alternativeName>
</protein>
<reference key="1">
    <citation type="journal article" date="2008" name="BMC Genomics">
        <title>Genome sequence and rapid evolution of the rice pathogen Xanthomonas oryzae pv. oryzae PXO99A.</title>
        <authorList>
            <person name="Salzberg S.L."/>
            <person name="Sommer D.D."/>
            <person name="Schatz M.C."/>
            <person name="Phillippy A.M."/>
            <person name="Rabinowicz P.D."/>
            <person name="Tsuge S."/>
            <person name="Furutani A."/>
            <person name="Ochiai H."/>
            <person name="Delcher A.L."/>
            <person name="Kelley D."/>
            <person name="Madupu R."/>
            <person name="Puiu D."/>
            <person name="Radune D."/>
            <person name="Shumway M."/>
            <person name="Trapnell C."/>
            <person name="Aparna G."/>
            <person name="Jha G."/>
            <person name="Pandey A."/>
            <person name="Patil P.B."/>
            <person name="Ishihara H."/>
            <person name="Meyer D.F."/>
            <person name="Szurek B."/>
            <person name="Verdier V."/>
            <person name="Koebnik R."/>
            <person name="Dow J.M."/>
            <person name="Ryan R.P."/>
            <person name="Hirata H."/>
            <person name="Tsuyumu S."/>
            <person name="Won Lee S."/>
            <person name="Seo Y.-S."/>
            <person name="Sriariyanum M."/>
            <person name="Ronald P.C."/>
            <person name="Sonti R.V."/>
            <person name="Van Sluys M.-A."/>
            <person name="Leach J.E."/>
            <person name="White F.F."/>
            <person name="Bogdanove A.J."/>
        </authorList>
    </citation>
    <scope>NUCLEOTIDE SEQUENCE [LARGE SCALE GENOMIC DNA]</scope>
    <source>
        <strain>PXO99A</strain>
    </source>
</reference>
<comment type="function">
    <text evidence="1">With CysN forms the ATP sulfurylase (ATPS) that catalyzes the adenylation of sulfate producing adenosine 5'-phosphosulfate (APS) and diphosphate, the first enzymatic step in sulfur assimilation pathway. APS synthesis involves the formation of a high-energy phosphoric-sulfuric acid anhydride bond driven by GTP hydrolysis by CysN coupled to ATP hydrolysis by CysD.</text>
</comment>
<comment type="catalytic activity">
    <reaction evidence="1">
        <text>sulfate + ATP + H(+) = adenosine 5'-phosphosulfate + diphosphate</text>
        <dbReference type="Rhea" id="RHEA:18133"/>
        <dbReference type="ChEBI" id="CHEBI:15378"/>
        <dbReference type="ChEBI" id="CHEBI:16189"/>
        <dbReference type="ChEBI" id="CHEBI:30616"/>
        <dbReference type="ChEBI" id="CHEBI:33019"/>
        <dbReference type="ChEBI" id="CHEBI:58243"/>
        <dbReference type="EC" id="2.7.7.4"/>
    </reaction>
</comment>
<comment type="pathway">
    <text evidence="1">Sulfur metabolism; hydrogen sulfide biosynthesis; sulfite from sulfate: step 1/3.</text>
</comment>
<comment type="subunit">
    <text evidence="1">Heterodimer composed of CysD, the smaller subunit, and CysN.</text>
</comment>
<comment type="similarity">
    <text evidence="1">Belongs to the PAPS reductase family. CysD subfamily.</text>
</comment>